<keyword id="KW-1185">Reference proteome</keyword>
<keyword id="KW-0677">Repeat</keyword>
<organism>
    <name type="scientific">Arabidopsis thaliana</name>
    <name type="common">Mouse-ear cress</name>
    <dbReference type="NCBI Taxonomy" id="3702"/>
    <lineage>
        <taxon>Eukaryota</taxon>
        <taxon>Viridiplantae</taxon>
        <taxon>Streptophyta</taxon>
        <taxon>Embryophyta</taxon>
        <taxon>Tracheophyta</taxon>
        <taxon>Spermatophyta</taxon>
        <taxon>Magnoliopsida</taxon>
        <taxon>eudicotyledons</taxon>
        <taxon>Gunneridae</taxon>
        <taxon>Pentapetalae</taxon>
        <taxon>rosids</taxon>
        <taxon>malvids</taxon>
        <taxon>Brassicales</taxon>
        <taxon>Brassicaceae</taxon>
        <taxon>Camelineae</taxon>
        <taxon>Arabidopsis</taxon>
    </lineage>
</organism>
<gene>
    <name type="ordered locus">At3g49730</name>
    <name type="ORF">T16K5.80</name>
</gene>
<protein>
    <recommendedName>
        <fullName>Pentatricopeptide repeat-containing protein At3g49730</fullName>
    </recommendedName>
</protein>
<proteinExistence type="evidence at transcript level"/>
<comment type="similarity">
    <text evidence="2">Belongs to the PPR family. P subfamily.</text>
</comment>
<comment type="sequence caution" evidence="2">
    <conflict type="erroneous gene model prediction">
        <sequence resource="EMBL-CDS" id="CAB66911"/>
    </conflict>
    <text>The predicted gene has been split into 2 genes: At3g49725 and At3g49730.</text>
</comment>
<comment type="online information" name="Pentatricopeptide repeat proteins">
    <link uri="https://ppr.plantenergy.uwa.edu.au"/>
</comment>
<sequence length="638" mass="73230">MRRFSTIVDLLISKKPSSQANSRIDLICKRFHISRVLNNDFVESTERKNGVGLVCPEKHEDEFAGEVEKIYRILRNHHSRVPKLELALNESGIDLRPGLIIRVLSRCGDAGNLGYRFFLWATKQPGYFHSYEVCKSMVMILSKMRQFGAVWGLIEEMRKTNPELIEPELFVVLMRRFASANMVKKAVEVLDEMPKYGLEPDEYVFGCLLDALCKNGSVKEASKVFEDMREKFPPNLRYFTSLLYGWCREGKLMEAKEVLVQMKEAGLEPDIVVFTNLLSGYAHAGKMADAYDLMNDMRKRGFEPNVNCYTVLIQALCRTEKRMDEAMRVFVEMERYGCEADIVTYTALISGFCKWGMIDKGYSVLDDMRKKGVMPSQVTYMQIMVAHEKKEQFEECLELIEKMKRRGCHPDLLIYNVVIRLACKLGEVKEAVRLWNEMEANGLSPGVDTFVIMINGFTSQGFLIEACNHFKEMVSRGIFSAPQYGTLKSLLNNLVRDDKLEMAKDVWSCISNKTSSCELNVSAWTIWIHALYAKGHVKEACSYCLDMMEMDLMPQPNTYAKLMKGLNKLYNRTIAAEITEKVVKMASEREMSFKMYKKKGEEDLIEKAKPKGNKEGKKKGTDHQRYKGRGERSRAKAL</sequence>
<dbReference type="EMBL" id="AL132965">
    <property type="protein sequence ID" value="CAB66911.1"/>
    <property type="status" value="ALT_SEQ"/>
    <property type="molecule type" value="Genomic_DNA"/>
</dbReference>
<dbReference type="EMBL" id="CP002686">
    <property type="protein sequence ID" value="AEE78583.1"/>
    <property type="molecule type" value="Genomic_DNA"/>
</dbReference>
<dbReference type="PIR" id="T46039">
    <property type="entry name" value="T46039"/>
</dbReference>
<dbReference type="RefSeq" id="NP_001319717.1">
    <property type="nucleotide sequence ID" value="NM_001339438.1"/>
</dbReference>
<dbReference type="SMR" id="P0C8A0"/>
<dbReference type="FunCoup" id="P0C8A0">
    <property type="interactions" value="781"/>
</dbReference>
<dbReference type="STRING" id="3702.P0C8A0"/>
<dbReference type="iPTMnet" id="P0C8A0"/>
<dbReference type="PaxDb" id="3702-AT3G49730.1"/>
<dbReference type="ProteomicsDB" id="248958"/>
<dbReference type="EnsemblPlants" id="AT3G49730.1">
    <property type="protein sequence ID" value="AT3G49730.1"/>
    <property type="gene ID" value="AT3G49730"/>
</dbReference>
<dbReference type="GeneID" id="28719394"/>
<dbReference type="Gramene" id="AT3G49730.1">
    <property type="protein sequence ID" value="AT3G49730.1"/>
    <property type="gene ID" value="AT3G49730"/>
</dbReference>
<dbReference type="KEGG" id="ath:AT3G49730"/>
<dbReference type="Araport" id="AT3G49730"/>
<dbReference type="TAIR" id="AT3G49730"/>
<dbReference type="eggNOG" id="KOG4197">
    <property type="taxonomic scope" value="Eukaryota"/>
</dbReference>
<dbReference type="HOGENOM" id="CLU_002706_49_20_1"/>
<dbReference type="InParanoid" id="P0C8A0"/>
<dbReference type="OMA" id="IEACDHF"/>
<dbReference type="PhylomeDB" id="P0C8A0"/>
<dbReference type="PRO" id="PR:P0C8A0"/>
<dbReference type="Proteomes" id="UP000006548">
    <property type="component" value="Chromosome 3"/>
</dbReference>
<dbReference type="ExpressionAtlas" id="P0C8A0">
    <property type="expression patterns" value="baseline and differential"/>
</dbReference>
<dbReference type="Gene3D" id="1.25.40.10">
    <property type="entry name" value="Tetratricopeptide repeat domain"/>
    <property type="match status" value="5"/>
</dbReference>
<dbReference type="InterPro" id="IPR002885">
    <property type="entry name" value="Pentatricopeptide_rpt"/>
</dbReference>
<dbReference type="InterPro" id="IPR050667">
    <property type="entry name" value="PPR-containing_protein"/>
</dbReference>
<dbReference type="InterPro" id="IPR011990">
    <property type="entry name" value="TPR-like_helical_dom_sf"/>
</dbReference>
<dbReference type="NCBIfam" id="TIGR00756">
    <property type="entry name" value="PPR"/>
    <property type="match status" value="8"/>
</dbReference>
<dbReference type="PANTHER" id="PTHR47939">
    <property type="entry name" value="MEMBRANE-ASSOCIATED SALT-INDUCIBLE PROTEIN-LIKE"/>
    <property type="match status" value="1"/>
</dbReference>
<dbReference type="PANTHER" id="PTHR47939:SF13">
    <property type="entry name" value="OS03G0201400 PROTEIN"/>
    <property type="match status" value="1"/>
</dbReference>
<dbReference type="Pfam" id="PF01535">
    <property type="entry name" value="PPR"/>
    <property type="match status" value="1"/>
</dbReference>
<dbReference type="Pfam" id="PF12854">
    <property type="entry name" value="PPR_1"/>
    <property type="match status" value="2"/>
</dbReference>
<dbReference type="Pfam" id="PF13041">
    <property type="entry name" value="PPR_2"/>
    <property type="match status" value="3"/>
</dbReference>
<dbReference type="PROSITE" id="PS51375">
    <property type="entry name" value="PPR"/>
    <property type="match status" value="11"/>
</dbReference>
<reference key="1">
    <citation type="journal article" date="2000" name="Nature">
        <title>Sequence and analysis of chromosome 3 of the plant Arabidopsis thaliana.</title>
        <authorList>
            <person name="Salanoubat M."/>
            <person name="Lemcke K."/>
            <person name="Rieger M."/>
            <person name="Ansorge W."/>
            <person name="Unseld M."/>
            <person name="Fartmann B."/>
            <person name="Valle G."/>
            <person name="Bloecker H."/>
            <person name="Perez-Alonso M."/>
            <person name="Obermaier B."/>
            <person name="Delseny M."/>
            <person name="Boutry M."/>
            <person name="Grivell L.A."/>
            <person name="Mache R."/>
            <person name="Puigdomenech P."/>
            <person name="De Simone V."/>
            <person name="Choisne N."/>
            <person name="Artiguenave F."/>
            <person name="Robert C."/>
            <person name="Brottier P."/>
            <person name="Wincker P."/>
            <person name="Cattolico L."/>
            <person name="Weissenbach J."/>
            <person name="Saurin W."/>
            <person name="Quetier F."/>
            <person name="Schaefer M."/>
            <person name="Mueller-Auer S."/>
            <person name="Gabel C."/>
            <person name="Fuchs M."/>
            <person name="Benes V."/>
            <person name="Wurmbach E."/>
            <person name="Drzonek H."/>
            <person name="Erfle H."/>
            <person name="Jordan N."/>
            <person name="Bangert S."/>
            <person name="Wiedelmann R."/>
            <person name="Kranz H."/>
            <person name="Voss H."/>
            <person name="Holland R."/>
            <person name="Brandt P."/>
            <person name="Nyakatura G."/>
            <person name="Vezzi A."/>
            <person name="D'Angelo M."/>
            <person name="Pallavicini A."/>
            <person name="Toppo S."/>
            <person name="Simionati B."/>
            <person name="Conrad A."/>
            <person name="Hornischer K."/>
            <person name="Kauer G."/>
            <person name="Loehnert T.-H."/>
            <person name="Nordsiek G."/>
            <person name="Reichelt J."/>
            <person name="Scharfe M."/>
            <person name="Schoen O."/>
            <person name="Bargues M."/>
            <person name="Terol J."/>
            <person name="Climent J."/>
            <person name="Navarro P."/>
            <person name="Collado C."/>
            <person name="Perez-Perez A."/>
            <person name="Ottenwaelder B."/>
            <person name="Duchemin D."/>
            <person name="Cooke R."/>
            <person name="Laudie M."/>
            <person name="Berger-Llauro C."/>
            <person name="Purnelle B."/>
            <person name="Masuy D."/>
            <person name="de Haan M."/>
            <person name="Maarse A.C."/>
            <person name="Alcaraz J.-P."/>
            <person name="Cottet A."/>
            <person name="Casacuberta E."/>
            <person name="Monfort A."/>
            <person name="Argiriou A."/>
            <person name="Flores M."/>
            <person name="Liguori R."/>
            <person name="Vitale D."/>
            <person name="Mannhaupt G."/>
            <person name="Haase D."/>
            <person name="Schoof H."/>
            <person name="Rudd S."/>
            <person name="Zaccaria P."/>
            <person name="Mewes H.-W."/>
            <person name="Mayer K.F.X."/>
            <person name="Kaul S."/>
            <person name="Town C.D."/>
            <person name="Koo H.L."/>
            <person name="Tallon L.J."/>
            <person name="Jenkins J."/>
            <person name="Rooney T."/>
            <person name="Rizzo M."/>
            <person name="Walts A."/>
            <person name="Utterback T."/>
            <person name="Fujii C.Y."/>
            <person name="Shea T.P."/>
            <person name="Creasy T.H."/>
            <person name="Haas B."/>
            <person name="Maiti R."/>
            <person name="Wu D."/>
            <person name="Peterson J."/>
            <person name="Van Aken S."/>
            <person name="Pai G."/>
            <person name="Militscher J."/>
            <person name="Sellers P."/>
            <person name="Gill J.E."/>
            <person name="Feldblyum T.V."/>
            <person name="Preuss D."/>
            <person name="Lin X."/>
            <person name="Nierman W.C."/>
            <person name="Salzberg S.L."/>
            <person name="White O."/>
            <person name="Venter J.C."/>
            <person name="Fraser C.M."/>
            <person name="Kaneko T."/>
            <person name="Nakamura Y."/>
            <person name="Sato S."/>
            <person name="Kato T."/>
            <person name="Asamizu E."/>
            <person name="Sasamoto S."/>
            <person name="Kimura T."/>
            <person name="Idesawa K."/>
            <person name="Kawashima K."/>
            <person name="Kishida Y."/>
            <person name="Kiyokawa C."/>
            <person name="Kohara M."/>
            <person name="Matsumoto M."/>
            <person name="Matsuno A."/>
            <person name="Muraki A."/>
            <person name="Nakayama S."/>
            <person name="Nakazaki N."/>
            <person name="Shinpo S."/>
            <person name="Takeuchi C."/>
            <person name="Wada T."/>
            <person name="Watanabe A."/>
            <person name="Yamada M."/>
            <person name="Yasuda M."/>
            <person name="Tabata S."/>
        </authorList>
    </citation>
    <scope>NUCLEOTIDE SEQUENCE [LARGE SCALE GENOMIC DNA]</scope>
    <source>
        <strain>cv. Columbia</strain>
    </source>
</reference>
<reference key="2">
    <citation type="journal article" date="2017" name="Plant J.">
        <title>Araport11: a complete reannotation of the Arabidopsis thaliana reference genome.</title>
        <authorList>
            <person name="Cheng C.Y."/>
            <person name="Krishnakumar V."/>
            <person name="Chan A.P."/>
            <person name="Thibaud-Nissen F."/>
            <person name="Schobel S."/>
            <person name="Town C.D."/>
        </authorList>
    </citation>
    <scope>GENOME REANNOTATION</scope>
    <source>
        <strain>cv. Columbia</strain>
    </source>
</reference>
<reference key="3">
    <citation type="journal article" date="2004" name="Plant Cell">
        <title>Genome-wide analysis of Arabidopsis pentatricopeptide repeat proteins reveals their essential role in organelle biogenesis.</title>
        <authorList>
            <person name="Lurin C."/>
            <person name="Andres C."/>
            <person name="Aubourg S."/>
            <person name="Bellaoui M."/>
            <person name="Bitton F."/>
            <person name="Bruyere C."/>
            <person name="Caboche M."/>
            <person name="Debast C."/>
            <person name="Gualberto J."/>
            <person name="Hoffmann B."/>
            <person name="Lecharny A."/>
            <person name="Le Ret M."/>
            <person name="Martin-Magniette M.-L."/>
            <person name="Mireau H."/>
            <person name="Peeters N."/>
            <person name="Renou J.-P."/>
            <person name="Szurek B."/>
            <person name="Taconnat L."/>
            <person name="Small I."/>
        </authorList>
    </citation>
    <scope>GENE FAMILY</scope>
</reference>
<accession>P0C8A0</accession>
<accession>Q9M2Y5</accession>
<name>PP275_ARATH</name>
<evidence type="ECO:0000256" key="1">
    <source>
        <dbReference type="SAM" id="MobiDB-lite"/>
    </source>
</evidence>
<evidence type="ECO:0000305" key="2"/>
<feature type="chain" id="PRO_0000356134" description="Pentatricopeptide repeat-containing protein At3g49730">
    <location>
        <begin position="1"/>
        <end position="638"/>
    </location>
</feature>
<feature type="repeat" description="PPR 1">
    <location>
        <begin position="130"/>
        <end position="164"/>
    </location>
</feature>
<feature type="repeat" description="PPR 2">
    <location>
        <begin position="166"/>
        <end position="200"/>
    </location>
</feature>
<feature type="repeat" description="PPR 3">
    <location>
        <begin position="201"/>
        <end position="231"/>
    </location>
</feature>
<feature type="repeat" description="PPR 4">
    <location>
        <begin position="235"/>
        <end position="269"/>
    </location>
</feature>
<feature type="repeat" description="PPR 5">
    <location>
        <begin position="270"/>
        <end position="304"/>
    </location>
</feature>
<feature type="repeat" description="PPR 6">
    <location>
        <begin position="305"/>
        <end position="340"/>
    </location>
</feature>
<feature type="repeat" description="PPR 7">
    <location>
        <begin position="341"/>
        <end position="375"/>
    </location>
</feature>
<feature type="repeat" description="PPR 8">
    <location>
        <begin position="376"/>
        <end position="410"/>
    </location>
</feature>
<feature type="repeat" description="PPR 9">
    <location>
        <begin position="411"/>
        <end position="445"/>
    </location>
</feature>
<feature type="repeat" description="PPR 10">
    <location>
        <begin position="446"/>
        <end position="480"/>
    </location>
</feature>
<feature type="repeat" description="PPR 11">
    <location>
        <begin position="483"/>
        <end position="513"/>
    </location>
</feature>
<feature type="repeat" description="PPR 12">
    <location>
        <begin position="520"/>
        <end position="554"/>
    </location>
</feature>
<feature type="region of interest" description="Disordered" evidence="1">
    <location>
        <begin position="604"/>
        <end position="638"/>
    </location>
</feature>